<dbReference type="EMBL" id="CP001157">
    <property type="protein sequence ID" value="ACO80039.1"/>
    <property type="molecule type" value="Genomic_DNA"/>
</dbReference>
<dbReference type="RefSeq" id="WP_012702414.1">
    <property type="nucleotide sequence ID" value="NC_012560.1"/>
</dbReference>
<dbReference type="SMR" id="C1DSU6"/>
<dbReference type="STRING" id="322710.Avin_38990"/>
<dbReference type="EnsemblBacteria" id="ACO80039">
    <property type="protein sequence ID" value="ACO80039"/>
    <property type="gene ID" value="Avin_38990"/>
</dbReference>
<dbReference type="GeneID" id="88186857"/>
<dbReference type="KEGG" id="avn:Avin_38990"/>
<dbReference type="eggNOG" id="COG0052">
    <property type="taxonomic scope" value="Bacteria"/>
</dbReference>
<dbReference type="HOGENOM" id="CLU_040318_1_2_6"/>
<dbReference type="OrthoDB" id="9808036at2"/>
<dbReference type="Proteomes" id="UP000002424">
    <property type="component" value="Chromosome"/>
</dbReference>
<dbReference type="GO" id="GO:0022627">
    <property type="term" value="C:cytosolic small ribosomal subunit"/>
    <property type="evidence" value="ECO:0007669"/>
    <property type="project" value="TreeGrafter"/>
</dbReference>
<dbReference type="GO" id="GO:0003735">
    <property type="term" value="F:structural constituent of ribosome"/>
    <property type="evidence" value="ECO:0007669"/>
    <property type="project" value="InterPro"/>
</dbReference>
<dbReference type="GO" id="GO:0006412">
    <property type="term" value="P:translation"/>
    <property type="evidence" value="ECO:0007669"/>
    <property type="project" value="UniProtKB-UniRule"/>
</dbReference>
<dbReference type="CDD" id="cd01425">
    <property type="entry name" value="RPS2"/>
    <property type="match status" value="1"/>
</dbReference>
<dbReference type="FunFam" id="1.10.287.610:FF:000001">
    <property type="entry name" value="30S ribosomal protein S2"/>
    <property type="match status" value="1"/>
</dbReference>
<dbReference type="Gene3D" id="3.40.50.10490">
    <property type="entry name" value="Glucose-6-phosphate isomerase like protein, domain 1"/>
    <property type="match status" value="1"/>
</dbReference>
<dbReference type="Gene3D" id="1.10.287.610">
    <property type="entry name" value="Helix hairpin bin"/>
    <property type="match status" value="1"/>
</dbReference>
<dbReference type="HAMAP" id="MF_00291_B">
    <property type="entry name" value="Ribosomal_uS2_B"/>
    <property type="match status" value="1"/>
</dbReference>
<dbReference type="InterPro" id="IPR001865">
    <property type="entry name" value="Ribosomal_uS2"/>
</dbReference>
<dbReference type="InterPro" id="IPR005706">
    <property type="entry name" value="Ribosomal_uS2_bac/mit/plastid"/>
</dbReference>
<dbReference type="InterPro" id="IPR018130">
    <property type="entry name" value="Ribosomal_uS2_CS"/>
</dbReference>
<dbReference type="InterPro" id="IPR023591">
    <property type="entry name" value="Ribosomal_uS2_flav_dom_sf"/>
</dbReference>
<dbReference type="NCBIfam" id="TIGR01011">
    <property type="entry name" value="rpsB_bact"/>
    <property type="match status" value="1"/>
</dbReference>
<dbReference type="PANTHER" id="PTHR12534">
    <property type="entry name" value="30S RIBOSOMAL PROTEIN S2 PROKARYOTIC AND ORGANELLAR"/>
    <property type="match status" value="1"/>
</dbReference>
<dbReference type="PANTHER" id="PTHR12534:SF0">
    <property type="entry name" value="SMALL RIBOSOMAL SUBUNIT PROTEIN US2M"/>
    <property type="match status" value="1"/>
</dbReference>
<dbReference type="Pfam" id="PF00318">
    <property type="entry name" value="Ribosomal_S2"/>
    <property type="match status" value="1"/>
</dbReference>
<dbReference type="PRINTS" id="PR00395">
    <property type="entry name" value="RIBOSOMALS2"/>
</dbReference>
<dbReference type="SUPFAM" id="SSF52313">
    <property type="entry name" value="Ribosomal protein S2"/>
    <property type="match status" value="1"/>
</dbReference>
<dbReference type="PROSITE" id="PS00963">
    <property type="entry name" value="RIBOSOMAL_S2_2"/>
    <property type="match status" value="1"/>
</dbReference>
<organism>
    <name type="scientific">Azotobacter vinelandii (strain DJ / ATCC BAA-1303)</name>
    <dbReference type="NCBI Taxonomy" id="322710"/>
    <lineage>
        <taxon>Bacteria</taxon>
        <taxon>Pseudomonadati</taxon>
        <taxon>Pseudomonadota</taxon>
        <taxon>Gammaproteobacteria</taxon>
        <taxon>Pseudomonadales</taxon>
        <taxon>Pseudomonadaceae</taxon>
        <taxon>Azotobacter</taxon>
    </lineage>
</organism>
<reference key="1">
    <citation type="journal article" date="2009" name="J. Bacteriol.">
        <title>Genome sequence of Azotobacter vinelandii, an obligate aerobe specialized to support diverse anaerobic metabolic processes.</title>
        <authorList>
            <person name="Setubal J.C."/>
            <person name="Dos Santos P."/>
            <person name="Goldman B.S."/>
            <person name="Ertesvaag H."/>
            <person name="Espin G."/>
            <person name="Rubio L.M."/>
            <person name="Valla S."/>
            <person name="Almeida N.F."/>
            <person name="Balasubramanian D."/>
            <person name="Cromes L."/>
            <person name="Curatti L."/>
            <person name="Du Z."/>
            <person name="Godsy E."/>
            <person name="Goodner B."/>
            <person name="Hellner-Burris K."/>
            <person name="Hernandez J.A."/>
            <person name="Houmiel K."/>
            <person name="Imperial J."/>
            <person name="Kennedy C."/>
            <person name="Larson T.J."/>
            <person name="Latreille P."/>
            <person name="Ligon L.S."/>
            <person name="Lu J."/>
            <person name="Maerk M."/>
            <person name="Miller N.M."/>
            <person name="Norton S."/>
            <person name="O'Carroll I.P."/>
            <person name="Paulsen I."/>
            <person name="Raulfs E.C."/>
            <person name="Roemer R."/>
            <person name="Rosser J."/>
            <person name="Segura D."/>
            <person name="Slater S."/>
            <person name="Stricklin S.L."/>
            <person name="Studholme D.J."/>
            <person name="Sun J."/>
            <person name="Viana C.J."/>
            <person name="Wallin E."/>
            <person name="Wang B."/>
            <person name="Wheeler C."/>
            <person name="Zhu H."/>
            <person name="Dean D.R."/>
            <person name="Dixon R."/>
            <person name="Wood D."/>
        </authorList>
    </citation>
    <scope>NUCLEOTIDE SEQUENCE [LARGE SCALE GENOMIC DNA]</scope>
    <source>
        <strain>DJ / ATCC BAA-1303</strain>
    </source>
</reference>
<feature type="chain" id="PRO_1000204874" description="Small ribosomal subunit protein uS2">
    <location>
        <begin position="1"/>
        <end position="246"/>
    </location>
</feature>
<accession>C1DSU6</accession>
<evidence type="ECO:0000255" key="1">
    <source>
        <dbReference type="HAMAP-Rule" id="MF_00291"/>
    </source>
</evidence>
<evidence type="ECO:0000305" key="2"/>
<protein>
    <recommendedName>
        <fullName evidence="1">Small ribosomal subunit protein uS2</fullName>
    </recommendedName>
    <alternativeName>
        <fullName evidence="2">30S ribosomal protein S2</fullName>
    </alternativeName>
</protein>
<name>RS2_AZOVD</name>
<keyword id="KW-0687">Ribonucleoprotein</keyword>
<keyword id="KW-0689">Ribosomal protein</keyword>
<proteinExistence type="inferred from homology"/>
<sequence length="246" mass="27286">MSQVTMRDMLKAGCHFGHQTRYWNPKMGRYIFGARNKIHIINLEKTLPMFNEALSFVEKLAAGKNKILFVGTKRSAGRLVREEAARCSMPYVDHRWLGGMLTNYKTIRASIKRLRELETQSQDGTFAKLTKKEALMRTRDLEKLERSLGGIKDMGGLPDAMFVIDVDHERIAISEANKLGIPVIGVVDTNSSPEGVDYIIPGNDDAIRAVQLYLGSVADAVLRGRQNAGTGDEFIEEVAASEAAEG</sequence>
<gene>
    <name evidence="1" type="primary">rpsB</name>
    <name type="ordered locus">Avin_38990</name>
</gene>
<comment type="similarity">
    <text evidence="1">Belongs to the universal ribosomal protein uS2 family.</text>
</comment>